<evidence type="ECO:0000255" key="1">
    <source>
        <dbReference type="HAMAP-Rule" id="MF_01291"/>
    </source>
</evidence>
<reference key="1">
    <citation type="journal article" date="2001" name="Nature">
        <title>Complete genome sequence of Salmonella enterica serovar Typhimurium LT2.</title>
        <authorList>
            <person name="McClelland M."/>
            <person name="Sanderson K.E."/>
            <person name="Spieth J."/>
            <person name="Clifton S.W."/>
            <person name="Latreille P."/>
            <person name="Courtney L."/>
            <person name="Porwollik S."/>
            <person name="Ali J."/>
            <person name="Dante M."/>
            <person name="Du F."/>
            <person name="Hou S."/>
            <person name="Layman D."/>
            <person name="Leonard S."/>
            <person name="Nguyen C."/>
            <person name="Scott K."/>
            <person name="Holmes A."/>
            <person name="Grewal N."/>
            <person name="Mulvaney E."/>
            <person name="Ryan E."/>
            <person name="Sun H."/>
            <person name="Florea L."/>
            <person name="Miller W."/>
            <person name="Stoneking T."/>
            <person name="Nhan M."/>
            <person name="Waterston R."/>
            <person name="Wilson R.K."/>
        </authorList>
    </citation>
    <scope>NUCLEOTIDE SEQUENCE [LARGE SCALE GENOMIC DNA]</scope>
    <source>
        <strain>LT2 / SGSC1412 / ATCC 700720</strain>
    </source>
</reference>
<keyword id="KW-0456">Lyase</keyword>
<keyword id="KW-0460">Magnesium</keyword>
<keyword id="KW-0479">Metal-binding</keyword>
<keyword id="KW-1185">Reference proteome</keyword>
<protein>
    <recommendedName>
        <fullName evidence="1">5-keto-4-deoxy-D-glucarate aldolase</fullName>
        <shortName evidence="1">KDGluc aldolase</shortName>
        <shortName evidence="1">KDGlucA</shortName>
        <ecNumber evidence="1">4.1.2.20</ecNumber>
    </recommendedName>
    <alternativeName>
        <fullName evidence="1">2-dehydro-3-deoxy-D-glucarate aldolase</fullName>
    </alternativeName>
    <alternativeName>
        <fullName evidence="1">2-keto-3-deoxy-D-glucarate aldolase</fullName>
    </alternativeName>
    <alternativeName>
        <fullName evidence="1">5-dehydro-4-deoxy-D-glucarate aldolase</fullName>
    </alternativeName>
    <alternativeName>
        <fullName evidence="1">Alpha-keto-beta-deoxy-D-glucarate aldolase</fullName>
    </alternativeName>
</protein>
<sequence>MNNAIFPNKFKAALAAQQVQIGCWSALASPITTEVLGLAGFDWLVLDGEHAPNDVTTLIPQLMALKGSASAPVVRVPTNEPVIIKRMLDIGFYNFLIPFVETQEEAARAVASTRYPPEGIRGVSVSHRANMFGTVPDYFAQSNKNITIIVQIESQLGVDNVDAIAATEGVDGIFVGPSDLAAALGHLGNASHPDVQQTIQHIFARAKAHGKPCGILAPVEADARRYLEWGATFVAVGSDLGAFRASTQKLADTFKK</sequence>
<accession>Q7CPQ8</accession>
<name>GARL_SALTY</name>
<organism>
    <name type="scientific">Salmonella typhimurium (strain LT2 / SGSC1412 / ATCC 700720)</name>
    <dbReference type="NCBI Taxonomy" id="99287"/>
    <lineage>
        <taxon>Bacteria</taxon>
        <taxon>Pseudomonadati</taxon>
        <taxon>Pseudomonadota</taxon>
        <taxon>Gammaproteobacteria</taxon>
        <taxon>Enterobacterales</taxon>
        <taxon>Enterobacteriaceae</taxon>
        <taxon>Salmonella</taxon>
    </lineage>
</organism>
<proteinExistence type="inferred from homology"/>
<feature type="chain" id="PRO_0000353158" description="5-keto-4-deoxy-D-glucarate aldolase">
    <location>
        <begin position="1"/>
        <end position="256"/>
    </location>
</feature>
<feature type="active site" description="Proton acceptor" evidence="1">
    <location>
        <position position="50"/>
    </location>
</feature>
<feature type="binding site" evidence="1">
    <location>
        <position position="151"/>
    </location>
    <ligand>
        <name>substrate</name>
    </ligand>
</feature>
<feature type="binding site" evidence="1">
    <location>
        <position position="153"/>
    </location>
    <ligand>
        <name>Mg(2+)</name>
        <dbReference type="ChEBI" id="CHEBI:18420"/>
    </ligand>
</feature>
<feature type="binding site" evidence="1">
    <location>
        <position position="178"/>
    </location>
    <ligand>
        <name>substrate</name>
    </ligand>
</feature>
<feature type="binding site" evidence="1">
    <location>
        <position position="179"/>
    </location>
    <ligand>
        <name>Mg(2+)</name>
        <dbReference type="ChEBI" id="CHEBI:18420"/>
    </ligand>
</feature>
<feature type="binding site" evidence="1">
    <location>
        <position position="179"/>
    </location>
    <ligand>
        <name>substrate</name>
    </ligand>
</feature>
<feature type="site" description="Transition state stabilizer" evidence="1">
    <location>
        <position position="75"/>
    </location>
</feature>
<feature type="site" description="Increases basicity of active site His" evidence="1">
    <location>
        <position position="89"/>
    </location>
</feature>
<gene>
    <name evidence="1" type="primary">garL</name>
    <name type="ordered locus">STM3249</name>
</gene>
<dbReference type="EC" id="4.1.2.20" evidence="1"/>
<dbReference type="EMBL" id="AE006468">
    <property type="protein sequence ID" value="AAL22121.1"/>
    <property type="molecule type" value="Genomic_DNA"/>
</dbReference>
<dbReference type="RefSeq" id="NP_462162.1">
    <property type="nucleotide sequence ID" value="NC_003197.2"/>
</dbReference>
<dbReference type="RefSeq" id="WP_001057715.1">
    <property type="nucleotide sequence ID" value="NC_003197.2"/>
</dbReference>
<dbReference type="SMR" id="Q7CPQ8"/>
<dbReference type="STRING" id="99287.STM3249"/>
<dbReference type="PaxDb" id="99287-STM3249"/>
<dbReference type="GeneID" id="1254772"/>
<dbReference type="KEGG" id="stm:STM3249"/>
<dbReference type="PATRIC" id="fig|99287.12.peg.3448"/>
<dbReference type="HOGENOM" id="CLU_059964_1_0_6"/>
<dbReference type="OMA" id="HQVQIGC"/>
<dbReference type="PhylomeDB" id="Q7CPQ8"/>
<dbReference type="BioCyc" id="SENT99287:STM3249-MONOMER"/>
<dbReference type="UniPathway" id="UPA00565">
    <property type="reaction ID" value="UER00630"/>
</dbReference>
<dbReference type="Proteomes" id="UP000001014">
    <property type="component" value="Chromosome"/>
</dbReference>
<dbReference type="GO" id="GO:0005737">
    <property type="term" value="C:cytoplasm"/>
    <property type="evidence" value="ECO:0000318"/>
    <property type="project" value="GO_Central"/>
</dbReference>
<dbReference type="GO" id="GO:0008672">
    <property type="term" value="F:2-dehydro-3-deoxyglucarate aldolase activity"/>
    <property type="evidence" value="ECO:0007669"/>
    <property type="project" value="UniProtKB-UniRule"/>
</dbReference>
<dbReference type="GO" id="GO:0016832">
    <property type="term" value="F:aldehyde-lyase activity"/>
    <property type="evidence" value="ECO:0000318"/>
    <property type="project" value="GO_Central"/>
</dbReference>
<dbReference type="GO" id="GO:0000287">
    <property type="term" value="F:magnesium ion binding"/>
    <property type="evidence" value="ECO:0007669"/>
    <property type="project" value="UniProtKB-UniRule"/>
</dbReference>
<dbReference type="GO" id="GO:0042838">
    <property type="term" value="P:D-glucarate catabolic process"/>
    <property type="evidence" value="ECO:0007669"/>
    <property type="project" value="UniProtKB-UniRule"/>
</dbReference>
<dbReference type="GO" id="GO:0046392">
    <property type="term" value="P:galactarate catabolic process"/>
    <property type="evidence" value="ECO:0007669"/>
    <property type="project" value="UniProtKB-UniRule"/>
</dbReference>
<dbReference type="FunFam" id="3.20.20.60:FF:000004">
    <property type="entry name" value="5-keto-4-deoxy-D-glucarate aldolase"/>
    <property type="match status" value="1"/>
</dbReference>
<dbReference type="Gene3D" id="3.20.20.60">
    <property type="entry name" value="Phosphoenolpyruvate-binding domains"/>
    <property type="match status" value="1"/>
</dbReference>
<dbReference type="HAMAP" id="MF_01291">
    <property type="entry name" value="KDGluc_aldolase"/>
    <property type="match status" value="1"/>
</dbReference>
<dbReference type="InterPro" id="IPR005000">
    <property type="entry name" value="Aldolase/citrate-lyase_domain"/>
</dbReference>
<dbReference type="InterPro" id="IPR017648">
    <property type="entry name" value="GarL"/>
</dbReference>
<dbReference type="InterPro" id="IPR050251">
    <property type="entry name" value="HpcH-HpaI_aldolase"/>
</dbReference>
<dbReference type="InterPro" id="IPR015813">
    <property type="entry name" value="Pyrv/PenolPyrv_kinase-like_dom"/>
</dbReference>
<dbReference type="InterPro" id="IPR040442">
    <property type="entry name" value="Pyrv_kinase-like_dom_sf"/>
</dbReference>
<dbReference type="NCBIfam" id="TIGR03239">
    <property type="entry name" value="GarL"/>
    <property type="match status" value="1"/>
</dbReference>
<dbReference type="NCBIfam" id="NF007849">
    <property type="entry name" value="PRK10558.1"/>
    <property type="match status" value="1"/>
</dbReference>
<dbReference type="PANTHER" id="PTHR30502">
    <property type="entry name" value="2-KETO-3-DEOXY-L-RHAMNONATE ALDOLASE"/>
    <property type="match status" value="1"/>
</dbReference>
<dbReference type="PANTHER" id="PTHR30502:SF4">
    <property type="entry name" value="5-KETO-4-DEOXY-D-GLUCARATE ALDOLASE"/>
    <property type="match status" value="1"/>
</dbReference>
<dbReference type="Pfam" id="PF03328">
    <property type="entry name" value="HpcH_HpaI"/>
    <property type="match status" value="1"/>
</dbReference>
<dbReference type="SUPFAM" id="SSF51621">
    <property type="entry name" value="Phosphoenolpyruvate/pyruvate domain"/>
    <property type="match status" value="1"/>
</dbReference>
<comment type="function">
    <text evidence="1">Catalyzes the reversible retro-aldol cleavage of both 5-keto-4-deoxy-D-glucarate and 2-keto-3-deoxy-D-glucarate to pyruvate and tartronic semialdehyde.</text>
</comment>
<comment type="catalytic activity">
    <reaction evidence="1">
        <text>5-dehydro-4-deoxy-D-glucarate = 2-hydroxy-3-oxopropanoate + pyruvate</text>
        <dbReference type="Rhea" id="RHEA:27726"/>
        <dbReference type="ChEBI" id="CHEBI:15361"/>
        <dbReference type="ChEBI" id="CHEBI:42819"/>
        <dbReference type="ChEBI" id="CHEBI:57978"/>
    </reaction>
</comment>
<comment type="catalytic activity">
    <reaction evidence="1">
        <text>2-dehydro-3-deoxy-D-glucarate = 2-hydroxy-3-oxopropanoate + pyruvate</text>
        <dbReference type="Rhea" id="RHEA:10268"/>
        <dbReference type="ChEBI" id="CHEBI:15361"/>
        <dbReference type="ChEBI" id="CHEBI:57978"/>
        <dbReference type="ChEBI" id="CHEBI:58098"/>
        <dbReference type="EC" id="4.1.2.20"/>
    </reaction>
</comment>
<comment type="cofactor">
    <cofactor evidence="1">
        <name>Mg(2+)</name>
        <dbReference type="ChEBI" id="CHEBI:18420"/>
    </cofactor>
    <text evidence="1">Binds 1 Mg(2+) ion per subunit.</text>
</comment>
<comment type="pathway">
    <text evidence="1">Carbohydrate acid metabolism; galactarate degradation; D-glycerate from galactarate: step 2/3.</text>
</comment>
<comment type="subunit">
    <text evidence="1">Homohexamer; trimer of dimers.</text>
</comment>
<comment type="similarity">
    <text evidence="1">Belongs to the HpcH/HpaI aldolase family. KDGluc aldolase subfamily.</text>
</comment>